<reference key="1">
    <citation type="journal article" date="2009" name="PLoS Biol.">
        <title>Lineage-specific biology revealed by a finished genome assembly of the mouse.</title>
        <authorList>
            <person name="Church D.M."/>
            <person name="Goodstadt L."/>
            <person name="Hillier L.W."/>
            <person name="Zody M.C."/>
            <person name="Goldstein S."/>
            <person name="She X."/>
            <person name="Bult C.J."/>
            <person name="Agarwala R."/>
            <person name="Cherry J.L."/>
            <person name="DiCuccio M."/>
            <person name="Hlavina W."/>
            <person name="Kapustin Y."/>
            <person name="Meric P."/>
            <person name="Maglott D."/>
            <person name="Birtle Z."/>
            <person name="Marques A.C."/>
            <person name="Graves T."/>
            <person name="Zhou S."/>
            <person name="Teague B."/>
            <person name="Potamousis K."/>
            <person name="Churas C."/>
            <person name="Place M."/>
            <person name="Herschleb J."/>
            <person name="Runnheim R."/>
            <person name="Forrest D."/>
            <person name="Amos-Landgraf J."/>
            <person name="Schwartz D.C."/>
            <person name="Cheng Z."/>
            <person name="Lindblad-Toh K."/>
            <person name="Eichler E.E."/>
            <person name="Ponting C.P."/>
        </authorList>
    </citation>
    <scope>NUCLEOTIDE SEQUENCE [LARGE SCALE GENOMIC DNA]</scope>
    <source>
        <strain>C57BL/6J</strain>
    </source>
</reference>
<reference key="2">
    <citation type="journal article" date="2004" name="Genome Res.">
        <title>The status, quality, and expansion of the NIH full-length cDNA project: the Mammalian Gene Collection (MGC).</title>
        <authorList>
            <consortium name="The MGC Project Team"/>
        </authorList>
    </citation>
    <scope>NUCLEOTIDE SEQUENCE [LARGE SCALE MRNA] (ISOFORM 2)</scope>
    <source>
        <strain>C57BL/6J</strain>
        <tissue>Brain</tissue>
    </source>
</reference>
<reference key="3">
    <citation type="journal article" date="2003" name="Mol. Biol. Cell">
        <title>Binding partners for the COOH-terminal appendage domains of the GGAs and gamma-adaptin.</title>
        <authorList>
            <person name="Lui W.W.Y."/>
            <person name="Collins B.M."/>
            <person name="Hirst J."/>
            <person name="Motley A."/>
            <person name="Millar C."/>
            <person name="Schu P."/>
            <person name="Owen D.J."/>
            <person name="Robinson M.S."/>
        </authorList>
    </citation>
    <scope>SUBCELLULAR LOCATION</scope>
</reference>
<reference key="4">
    <citation type="journal article" date="2007" name="Proc. Natl. Acad. Sci. U.S.A.">
        <title>Large-scale phosphorylation analysis of mouse liver.</title>
        <authorList>
            <person name="Villen J."/>
            <person name="Beausoleil S.A."/>
            <person name="Gerber S.A."/>
            <person name="Gygi S.P."/>
        </authorList>
    </citation>
    <scope>PHOSPHORYLATION [LARGE SCALE ANALYSIS] AT SER-974</scope>
    <scope>IDENTIFICATION BY MASS SPECTROMETRY [LARGE SCALE ANALYSIS]</scope>
    <source>
        <tissue>Liver</tissue>
    </source>
</reference>
<reference key="5">
    <citation type="journal article" date="2009" name="Immunity">
        <title>The phagosomal proteome in interferon-gamma-activated macrophages.</title>
        <authorList>
            <person name="Trost M."/>
            <person name="English L."/>
            <person name="Lemieux S."/>
            <person name="Courcelles M."/>
            <person name="Desjardins M."/>
            <person name="Thibault P."/>
        </authorList>
    </citation>
    <scope>PHOSPHORYLATION [LARGE SCALE ANALYSIS] AT SER-576; SER-744; SER-974 AND SER-1067</scope>
    <scope>IDENTIFICATION BY MASS SPECTROMETRY [LARGE SCALE ANALYSIS]</scope>
</reference>
<reference key="6">
    <citation type="journal article" date="2010" name="Cell">
        <title>A tissue-specific atlas of mouse protein phosphorylation and expression.</title>
        <authorList>
            <person name="Huttlin E.L."/>
            <person name="Jedrychowski M.P."/>
            <person name="Elias J.E."/>
            <person name="Goswami T."/>
            <person name="Rad R."/>
            <person name="Beausoleil S.A."/>
            <person name="Villen J."/>
            <person name="Haas W."/>
            <person name="Sowa M.E."/>
            <person name="Gygi S.P."/>
        </authorList>
    </citation>
    <scope>PHOSPHORYLATION [LARGE SCALE ANALYSIS] AT SER-974</scope>
    <scope>IDENTIFICATION BY MASS SPECTROMETRY [LARGE SCALE ANALYSIS]</scope>
    <source>
        <tissue>Brain</tissue>
        <tissue>Brown adipose tissue</tissue>
        <tissue>Kidney</tissue>
        <tissue>Lung</tissue>
        <tissue>Pancreas</tissue>
        <tissue>Spleen</tissue>
        <tissue>Testis</tissue>
    </source>
</reference>
<reference key="7">
    <citation type="journal article" date="2013" name="Mol. Cell">
        <title>SIRT5-mediated lysine desuccinylation impacts diverse metabolic pathways.</title>
        <authorList>
            <person name="Park J."/>
            <person name="Chen Y."/>
            <person name="Tishkoff D.X."/>
            <person name="Peng C."/>
            <person name="Tan M."/>
            <person name="Dai L."/>
            <person name="Xie Z."/>
            <person name="Zhang Y."/>
            <person name="Zwaans B.M."/>
            <person name="Skinner M.E."/>
            <person name="Lombard D.B."/>
            <person name="Zhao Y."/>
        </authorList>
    </citation>
    <scope>ACETYLATION [LARGE SCALE ANALYSIS] AT LYS-509</scope>
    <scope>IDENTIFICATION BY MASS SPECTROMETRY [LARGE SCALE ANALYSIS]</scope>
    <source>
        <tissue>Embryonic fibroblast</tissue>
    </source>
</reference>
<sequence length="1306" mass="139616">MALRPGAGASGAAGAGAGPGGAGSFMFPVAGGMRPPQAGLIPMQQQGFPMVSVMQPNMQGMMGMNYSSQMSQGPIAMQAGIPMGPMPAAGVPFLGQPPFLSMRPAGPQYTPDMQKQFAEEQQKRFEQQQKLLEEERKRRQFEEQKQKLRLLSSVKPKTGEKNRDDALEAIKGNLDGFSRDAKMHPTPASHPKKQGPSLEEKLLVSCDVSASGQEHIKLNTPDAGHKAIVPGSSKNCPGLMAHNRGAVDGCVSGPASAEAEKTSDQTLSKEESGVGVFPSQDPAQSRMPPWIYNESLVPDAYKKILETTMTPTGIDTAKLYPILMSSGLPRETLGQIWALANRTTPGRLTKEELYTVLAMVAVTQRGVPAMSPDALSQFPAAPIPTLSGFPMTLPTPVSQPTAMPSGPTGSMPLTLGQPIMGINLVGPVGGAAAPTSSGFMPAYPSNQVGKTEEDDFQDFQDASKSGSIDDSFTDFQEMPASSKTSNSQHGNSAPSLLIPFPGTKASTDKYAVFKGISTDKPSENPASFGESGDKYSAFRELEQTTDSKPLGESFAEFRSTGTDDGFTDFKTADSVSPLEPPTKDTFPSAFASGAAQQTQTQVKTPLNLEDLDMFSSVDCSGEKQVPFSATFSTAKSVSTRPQPAGSAAASAALASTKTSSLADDFGEFNLFGEYSNPASAGEQDDFADFMAFGNSSISSEPKASDKYEALREEVSPSPLSSSTVEGAQHPPAAATKYDVFKQLSLEGAGLAMEEFKENTSSTKSEDDFADFHSSKFSSTSSDKSLGEKAVAFRHAKEDSSSVKSLDLPSIGGSSVGKEDSEDALSVQFDMKLADVGGDLKHVMSDSSLDLPTVSGQHPPAADTEDLSCAAFGSCSSHFTVSTLTSCEWSDRADALQGRKLSPFVLSAGSRSFSATSNLHTKEISFGSSENITMSSLSKGSALASEDALPETAFPAFASFKDMMPQTTEQKEFESGDFQDFTRQDMPTVDRSQETSCPSPASSVASHETPKEGADDFGEFQSEKSKISKFDFLVANSQSKMKSSEEMIKSELATFDLSVQGSHKRSLSLGDKEISRSSPSPALEQPFRDRSNTLSERAALPVIRDKYKDLTGEVEENERYAYEWQRCLGSALDVIKKANDTLNGISSSAVCTEVIQSAQGMEYLLGVVEVYRVTKRVELGIKATAVCSEKLQQLLKDIDKVWNNLIGFMSLATLTPDENSLDFSSCMLRPGIKNAQELACGVCLLNVDSRSRKEETPAEEQPKKAFNSETDSFKLAYGGHQYHASCANFWINCVEPKPPGLLLPDLL</sequence>
<proteinExistence type="evidence at protein level"/>
<organism>
    <name type="scientific">Mus musculus</name>
    <name type="common">Mouse</name>
    <dbReference type="NCBI Taxonomy" id="10090"/>
    <lineage>
        <taxon>Eukaryota</taxon>
        <taxon>Metazoa</taxon>
        <taxon>Chordata</taxon>
        <taxon>Craniata</taxon>
        <taxon>Vertebrata</taxon>
        <taxon>Euteleostomi</taxon>
        <taxon>Mammalia</taxon>
        <taxon>Eutheria</taxon>
        <taxon>Euarchontoglires</taxon>
        <taxon>Glires</taxon>
        <taxon>Rodentia</taxon>
        <taxon>Myomorpha</taxon>
        <taxon>Muroidea</taxon>
        <taxon>Muridae</taxon>
        <taxon>Murinae</taxon>
        <taxon>Mus</taxon>
        <taxon>Mus</taxon>
    </lineage>
</organism>
<evidence type="ECO:0000250" key="1"/>
<evidence type="ECO:0000250" key="2">
    <source>
        <dbReference type="UniProtKB" id="Q9JKC9"/>
    </source>
</evidence>
<evidence type="ECO:0000250" key="3">
    <source>
        <dbReference type="UniProtKB" id="Q9UMZ2"/>
    </source>
</evidence>
<evidence type="ECO:0000255" key="4"/>
<evidence type="ECO:0000255" key="5">
    <source>
        <dbReference type="PROSITE-ProRule" id="PRU00077"/>
    </source>
</evidence>
<evidence type="ECO:0000256" key="6">
    <source>
        <dbReference type="SAM" id="MobiDB-lite"/>
    </source>
</evidence>
<evidence type="ECO:0000269" key="7">
    <source>
    </source>
</evidence>
<evidence type="ECO:0000303" key="8">
    <source>
    </source>
</evidence>
<evidence type="ECO:0000305" key="9"/>
<evidence type="ECO:0007744" key="10">
    <source>
    </source>
</evidence>
<evidence type="ECO:0007744" key="11">
    <source>
    </source>
</evidence>
<evidence type="ECO:0007744" key="12">
    <source>
    </source>
</evidence>
<evidence type="ECO:0007744" key="13">
    <source>
    </source>
</evidence>
<keyword id="KW-0007">Acetylation</keyword>
<keyword id="KW-0025">Alternative splicing</keyword>
<keyword id="KW-0175">Coiled coil</keyword>
<keyword id="KW-0963">Cytoplasm</keyword>
<keyword id="KW-0968">Cytoplasmic vesicle</keyword>
<keyword id="KW-0254">Endocytosis</keyword>
<keyword id="KW-0333">Golgi apparatus</keyword>
<keyword id="KW-0472">Membrane</keyword>
<keyword id="KW-0597">Phosphoprotein</keyword>
<keyword id="KW-0653">Protein transport</keyword>
<keyword id="KW-1185">Reference proteome</keyword>
<keyword id="KW-0677">Repeat</keyword>
<keyword id="KW-0813">Transport</keyword>
<gene>
    <name type="primary">Synrg</name>
    <name type="synonym">Ap1gbp1</name>
    <name type="synonym">Syng</name>
</gene>
<comment type="function">
    <text evidence="3">Plays a role in endocytosis and/or membrane trafficking at the trans-Golgi network (TGN) (By similarity). May act by linking the adapter protein complex AP-1 to other proteins (By similarity). Component of clathrin-coated vesicles (By similarity). Component of the aftiphilin/p200/gamma-synergin complex, which plays roles in AP1G1/AP-1-mediated protein trafficking including the trafficking of transferrin from early to recycling endosomes, and the membrane trafficking of furin and the lysosomal enzyme cathepsin D between the trans-Golgi network (TGN) and endosomes (By similarity).</text>
</comment>
<comment type="subunit">
    <text evidence="2 3">Self-associates (By similarity). Interacts with GGA1 (via GAE domain) (By similarity). Interacts with GGA2 and GGA3 (By similarity). Interacts with AP1G1 (via GAE domain), a subunit of adapter protein complex AP-1 (By similarity). Interacts with AP1G2 (via GAE domain) a subunit of adapter protein complex AP-1 (By similarity). Component of the aftiphilin/p200/gamma-synergin complex, at least composed of AFTPH/aftiphilin, HEATR5B/p200a and SYNRG/gamma-synergin, which plays a role in the AP1G1/AP-1-mediated trafficking of transferrin from early to recycling endosomes (By similarity). Within the complex interacts with AFTPH/aftiphilin and HEATR5B/p200a; the interactions are direct (By similarity). Interacts (via EH domain) with SCAMP1 (By similarity).</text>
</comment>
<comment type="subcellular location">
    <subcellularLocation>
        <location evidence="7">Cytoplasm</location>
        <location evidence="7">Cytosol</location>
    </subcellularLocation>
    <subcellularLocation>
        <location evidence="7">Golgi apparatus</location>
        <location evidence="7">trans-Golgi network membrane</location>
        <topology evidence="7">Peripheral membrane protein</topology>
    </subcellularLocation>
    <subcellularLocation>
        <location evidence="3">Cytoplasm</location>
        <location evidence="3">Perinuclear region</location>
    </subcellularLocation>
    <subcellularLocation>
        <location evidence="3">Cytoplasmic vesicle</location>
        <location evidence="3">Clathrin-coated vesicle</location>
    </subcellularLocation>
    <text evidence="2 3">Localization at clathrin-coated vesicles depends on AFTPH/aftiphilin (By similarity). Associates with membranes via the adapter protein complex AP-1 (By similarity). Colocalizes with AP1G1 (By similarity).</text>
</comment>
<comment type="alternative products">
    <event type="alternative splicing"/>
    <isoform>
        <id>Q5SV85-1</id>
        <name>1</name>
        <sequence type="displayed"/>
    </isoform>
    <isoform>
        <id>Q5SV85-2</id>
        <name>2</name>
        <sequence type="described" ref="VSP_013251 VSP_013252 VSP_013253 VSP_013254"/>
    </isoform>
</comment>
<comment type="domain">
    <text evidence="1">The DFXDF motifs mediate the interaction with gamma-appendage subunits AP1G1 and AP1G2.</text>
</comment>
<comment type="sequence caution" evidence="9">
    <conflict type="erroneous gene model prediction">
        <sequence resource="EMBL-CDS" id="CAI25511"/>
    </conflict>
</comment>
<dbReference type="EMBL" id="AL645615">
    <property type="protein sequence ID" value="CAI25509.1"/>
    <property type="molecule type" value="Genomic_DNA"/>
</dbReference>
<dbReference type="EMBL" id="AL645615">
    <property type="protein sequence ID" value="CAI25510.1"/>
    <property type="molecule type" value="Genomic_DNA"/>
</dbReference>
<dbReference type="EMBL" id="AL645615">
    <property type="protein sequence ID" value="CAI25511.1"/>
    <property type="status" value="ALT_SEQ"/>
    <property type="molecule type" value="Genomic_DNA"/>
</dbReference>
<dbReference type="EMBL" id="BC056370">
    <property type="protein sequence ID" value="AAH56370.1"/>
    <property type="molecule type" value="mRNA"/>
</dbReference>
<dbReference type="CCDS" id="CCDS25181.1">
    <molecule id="Q5SV85-2"/>
</dbReference>
<dbReference type="RefSeq" id="NP_919322.1">
    <molecule id="Q5SV85-2"/>
    <property type="nucleotide sequence ID" value="NM_194341.3"/>
</dbReference>
<dbReference type="SMR" id="Q5SV85"/>
<dbReference type="BioGRID" id="229834">
    <property type="interactions" value="5"/>
</dbReference>
<dbReference type="FunCoup" id="Q5SV85">
    <property type="interactions" value="707"/>
</dbReference>
<dbReference type="STRING" id="10090.ENSMUSP00000090510"/>
<dbReference type="GlyGen" id="Q5SV85">
    <property type="glycosylation" value="7 sites, 1 N-linked glycan (1 site), 1 O-linked glycan (4 sites)"/>
</dbReference>
<dbReference type="iPTMnet" id="Q5SV85"/>
<dbReference type="PhosphoSitePlus" id="Q5SV85"/>
<dbReference type="jPOST" id="Q5SV85"/>
<dbReference type="PaxDb" id="10090-ENSMUSP00000059000"/>
<dbReference type="PeptideAtlas" id="Q5SV85"/>
<dbReference type="ProteomicsDB" id="254741">
    <molecule id="Q5SV85-1"/>
</dbReference>
<dbReference type="ProteomicsDB" id="254742">
    <molecule id="Q5SV85-2"/>
</dbReference>
<dbReference type="Pumba" id="Q5SV85"/>
<dbReference type="Antibodypedia" id="74878">
    <property type="antibodies" value="35 antibodies from 11 providers"/>
</dbReference>
<dbReference type="DNASU" id="217030"/>
<dbReference type="Ensembl" id="ENSMUST00000049714.15">
    <molecule id="Q5SV85-1"/>
    <property type="protein sequence ID" value="ENSMUSP00000059000.9"/>
    <property type="gene ID" value="ENSMUSG00000034940.16"/>
</dbReference>
<dbReference type="Ensembl" id="ENSMUST00000092834.12">
    <molecule id="Q5SV85-2"/>
    <property type="protein sequence ID" value="ENSMUSP00000090510.6"/>
    <property type="gene ID" value="ENSMUSG00000034940.16"/>
</dbReference>
<dbReference type="GeneID" id="217030"/>
<dbReference type="KEGG" id="mmu:217030"/>
<dbReference type="UCSC" id="uc007kqa.3">
    <molecule id="Q5SV85-2"/>
    <property type="organism name" value="mouse"/>
</dbReference>
<dbReference type="AGR" id="MGI:1354742"/>
<dbReference type="CTD" id="11276"/>
<dbReference type="MGI" id="MGI:1354742">
    <property type="gene designation" value="Synrg"/>
</dbReference>
<dbReference type="VEuPathDB" id="HostDB:ENSMUSG00000034940"/>
<dbReference type="eggNOG" id="KOG0998">
    <property type="taxonomic scope" value="Eukaryota"/>
</dbReference>
<dbReference type="GeneTree" id="ENSGT00390000010789"/>
<dbReference type="HOGENOM" id="CLU_263817_0_0_1"/>
<dbReference type="InParanoid" id="Q5SV85"/>
<dbReference type="OrthoDB" id="524326at2759"/>
<dbReference type="PhylomeDB" id="Q5SV85"/>
<dbReference type="TreeFam" id="TF316700"/>
<dbReference type="BioGRID-ORCS" id="217030">
    <property type="hits" value="3 hits in 78 CRISPR screens"/>
</dbReference>
<dbReference type="ChiTaRS" id="Synrg">
    <property type="organism name" value="mouse"/>
</dbReference>
<dbReference type="PRO" id="PR:Q5SV85"/>
<dbReference type="Proteomes" id="UP000000589">
    <property type="component" value="Chromosome 11"/>
</dbReference>
<dbReference type="RNAct" id="Q5SV85">
    <property type="molecule type" value="protein"/>
</dbReference>
<dbReference type="Bgee" id="ENSMUSG00000034940">
    <property type="expression patterns" value="Expressed in animal zygote and 220 other cell types or tissues"/>
</dbReference>
<dbReference type="ExpressionAtlas" id="Q5SV85">
    <property type="expression patterns" value="baseline and differential"/>
</dbReference>
<dbReference type="GO" id="GO:0030136">
    <property type="term" value="C:clathrin-coated vesicle"/>
    <property type="evidence" value="ECO:0007669"/>
    <property type="project" value="UniProtKB-SubCell"/>
</dbReference>
<dbReference type="GO" id="GO:0005829">
    <property type="term" value="C:cytosol"/>
    <property type="evidence" value="ECO:0007669"/>
    <property type="project" value="UniProtKB-SubCell"/>
</dbReference>
<dbReference type="GO" id="GO:0005794">
    <property type="term" value="C:Golgi apparatus"/>
    <property type="evidence" value="ECO:0007669"/>
    <property type="project" value="UniProtKB-SubCell"/>
</dbReference>
<dbReference type="GO" id="GO:0016020">
    <property type="term" value="C:membrane"/>
    <property type="evidence" value="ECO:0007669"/>
    <property type="project" value="UniProtKB-KW"/>
</dbReference>
<dbReference type="GO" id="GO:0048471">
    <property type="term" value="C:perinuclear region of cytoplasm"/>
    <property type="evidence" value="ECO:0007669"/>
    <property type="project" value="UniProtKB-SubCell"/>
</dbReference>
<dbReference type="GO" id="GO:0006897">
    <property type="term" value="P:endocytosis"/>
    <property type="evidence" value="ECO:0007669"/>
    <property type="project" value="UniProtKB-KW"/>
</dbReference>
<dbReference type="GO" id="GO:0015031">
    <property type="term" value="P:protein transport"/>
    <property type="evidence" value="ECO:0007669"/>
    <property type="project" value="UniProtKB-KW"/>
</dbReference>
<dbReference type="CDD" id="cd00052">
    <property type="entry name" value="EH"/>
    <property type="match status" value="1"/>
</dbReference>
<dbReference type="Gene3D" id="1.10.238.10">
    <property type="entry name" value="EF-hand"/>
    <property type="match status" value="1"/>
</dbReference>
<dbReference type="InterPro" id="IPR011992">
    <property type="entry name" value="EF-hand-dom_pair"/>
</dbReference>
<dbReference type="InterPro" id="IPR000261">
    <property type="entry name" value="EH_dom"/>
</dbReference>
<dbReference type="InterPro" id="IPR039656">
    <property type="entry name" value="SYNRG"/>
</dbReference>
<dbReference type="PANTHER" id="PTHR15463">
    <property type="entry name" value="AP1 GAMMA SUBUNIT BINDING PROTEIN 1"/>
    <property type="match status" value="1"/>
</dbReference>
<dbReference type="PANTHER" id="PTHR15463:SF2">
    <property type="entry name" value="SYNERGIN GAMMA"/>
    <property type="match status" value="1"/>
</dbReference>
<dbReference type="Pfam" id="PF12763">
    <property type="entry name" value="EH"/>
    <property type="match status" value="1"/>
</dbReference>
<dbReference type="SMART" id="SM00027">
    <property type="entry name" value="EH"/>
    <property type="match status" value="1"/>
</dbReference>
<dbReference type="SUPFAM" id="SSF47473">
    <property type="entry name" value="EF-hand"/>
    <property type="match status" value="1"/>
</dbReference>
<dbReference type="PROSITE" id="PS50031">
    <property type="entry name" value="EH"/>
    <property type="match status" value="1"/>
</dbReference>
<name>SYNRG_MOUSE</name>
<protein>
    <recommendedName>
        <fullName>Synergin gamma</fullName>
    </recommendedName>
    <alternativeName>
        <fullName>AP1 subunit gamma-binding protein 1</fullName>
    </alternativeName>
    <alternativeName>
        <fullName>Gamma-synergin</fullName>
    </alternativeName>
</protein>
<accession>Q5SV85</accession>
<accession>Q5SV84</accession>
<accession>Q6PHT6</accession>
<feature type="chain" id="PRO_0000072388" description="Synergin gamma">
    <location>
        <begin position="1"/>
        <end position="1306"/>
    </location>
</feature>
<feature type="domain" description="EH" evidence="5">
    <location>
        <begin position="293"/>
        <end position="404"/>
    </location>
</feature>
<feature type="region of interest" description="Disordered" evidence="6">
    <location>
        <begin position="176"/>
        <end position="196"/>
    </location>
</feature>
<feature type="region of interest" description="Disordered" evidence="6">
    <location>
        <begin position="252"/>
        <end position="285"/>
    </location>
</feature>
<feature type="region of interest" description="Disordered" evidence="6">
    <location>
        <begin position="460"/>
        <end position="494"/>
    </location>
</feature>
<feature type="region of interest" description="Interaction with AP1G1" evidence="3">
    <location>
        <begin position="514"/>
        <end position="778"/>
    </location>
</feature>
<feature type="region of interest" description="Disordered" evidence="6">
    <location>
        <begin position="559"/>
        <end position="601"/>
    </location>
</feature>
<feature type="region of interest" description="Interaction with AP1G1, AP1G2 and GGA1" evidence="3">
    <location>
        <begin position="661"/>
        <end position="673"/>
    </location>
</feature>
<feature type="region of interest" description="Disordered" evidence="6">
    <location>
        <begin position="697"/>
        <end position="730"/>
    </location>
</feature>
<feature type="region of interest" description="Disordered" evidence="6">
    <location>
        <begin position="986"/>
        <end position="1016"/>
    </location>
</feature>
<feature type="region of interest" description="Disordered" evidence="6">
    <location>
        <begin position="1065"/>
        <end position="1090"/>
    </location>
</feature>
<feature type="coiled-coil region" evidence="4">
    <location>
        <begin position="113"/>
        <end position="153"/>
    </location>
</feature>
<feature type="short sequence motif" description="DFXDF motif 1">
    <location>
        <begin position="455"/>
        <end position="459"/>
    </location>
</feature>
<feature type="short sequence motif" description="DFXDF motif 2">
    <location>
        <begin position="685"/>
        <end position="689"/>
    </location>
</feature>
<feature type="short sequence motif" description="DFXDF motif 3">
    <location>
        <begin position="767"/>
        <end position="771"/>
    </location>
</feature>
<feature type="compositionally biased region" description="Basic and acidic residues" evidence="6">
    <location>
        <begin position="258"/>
        <end position="272"/>
    </location>
</feature>
<feature type="compositionally biased region" description="Basic and acidic residues" evidence="6">
    <location>
        <begin position="702"/>
        <end position="714"/>
    </location>
</feature>
<feature type="compositionally biased region" description="Polar residues" evidence="6">
    <location>
        <begin position="993"/>
        <end position="1005"/>
    </location>
</feature>
<feature type="modified residue" description="Phosphoserine" evidence="3">
    <location>
        <position position="471"/>
    </location>
</feature>
<feature type="modified residue" description="N6-acetyllysine" evidence="13">
    <location>
        <position position="509"/>
    </location>
</feature>
<feature type="modified residue" description="Phosphoserine" evidence="11">
    <location>
        <position position="576"/>
    </location>
</feature>
<feature type="modified residue" description="Phosphoserine" evidence="3">
    <location>
        <position position="715"/>
    </location>
</feature>
<feature type="modified residue" description="N6-acetyllysine" evidence="3">
    <location>
        <position position="736"/>
    </location>
</feature>
<feature type="modified residue" description="Phosphoserine" evidence="11">
    <location>
        <position position="744"/>
    </location>
</feature>
<feature type="modified residue" description="Phosphoserine" evidence="3">
    <location>
        <position position="764"/>
    </location>
</feature>
<feature type="modified residue" description="Phosphoserine" evidence="3">
    <location>
        <position position="804"/>
    </location>
</feature>
<feature type="modified residue" description="Phosphoserine" evidence="3">
    <location>
        <position position="844"/>
    </location>
</feature>
<feature type="modified residue" description="Phosphoserine" evidence="3">
    <location>
        <position position="847"/>
    </location>
</feature>
<feature type="modified residue" description="Phosphoserine" evidence="3">
    <location>
        <position position="901"/>
    </location>
</feature>
<feature type="modified residue" description="Phosphoserine" evidence="3">
    <location>
        <position position="911"/>
    </location>
</feature>
<feature type="modified residue" description="Phosphoserine" evidence="3">
    <location>
        <position position="927"/>
    </location>
</feature>
<feature type="modified residue" description="Phosphoserine" evidence="10 11 12">
    <location>
        <position position="974"/>
    </location>
</feature>
<feature type="modified residue" description="Phosphoserine" evidence="3">
    <location>
        <position position="998"/>
    </location>
</feature>
<feature type="modified residue" description="Phosphoserine" evidence="2">
    <location>
        <position position="1065"/>
    </location>
</feature>
<feature type="modified residue" description="Phosphoserine" evidence="11">
    <location>
        <position position="1067"/>
    </location>
</feature>
<feature type="modified residue" description="Phosphoserine" evidence="3">
    <location>
        <position position="1079"/>
    </location>
</feature>
<feature type="modified residue" description="Phosphoserine" evidence="3">
    <location>
        <position position="1090"/>
    </location>
</feature>
<feature type="modified residue" description="Phosphothreonine" evidence="3">
    <location>
        <position position="1092"/>
    </location>
</feature>
<feature type="splice variant" id="VSP_013251" description="In isoform 2." evidence="8">
    <location>
        <position position="38"/>
    </location>
</feature>
<feature type="splice variant" id="VSP_013252" description="In isoform 2." evidence="8">
    <location>
        <begin position="195"/>
        <end position="272"/>
    </location>
</feature>
<feature type="splice variant" id="VSP_013253" description="In isoform 2." evidence="8">
    <location>
        <begin position="862"/>
        <end position="938"/>
    </location>
</feature>
<feature type="splice variant" id="VSP_013254" description="In isoform 2." evidence="8">
    <location>
        <begin position="1252"/>
        <end position="1263"/>
    </location>
</feature>